<protein>
    <recommendedName>
        <fullName>Tumor necrosis factor receptor superfamily member 12A</fullName>
    </recommendedName>
    <alternativeName>
        <fullName>Fibroblast growth factor-inducible immediate-early response protein 14</fullName>
        <shortName>FGF-inducible 14</shortName>
    </alternativeName>
    <alternativeName>
        <fullName>Fibroblast growth factor-regulated protein 2</fullName>
    </alternativeName>
    <alternativeName>
        <fullName>Tweak-receptor</fullName>
        <shortName>TweakR</shortName>
    </alternativeName>
    <cdAntigenName>CD266</cdAntigenName>
</protein>
<gene>
    <name type="primary">Tnfrsf12a</name>
    <name type="synonym">Fgfrp2</name>
    <name type="synonym">Fn14</name>
</gene>
<organism>
    <name type="scientific">Mus musculus</name>
    <name type="common">Mouse</name>
    <dbReference type="NCBI Taxonomy" id="10090"/>
    <lineage>
        <taxon>Eukaryota</taxon>
        <taxon>Metazoa</taxon>
        <taxon>Chordata</taxon>
        <taxon>Craniata</taxon>
        <taxon>Vertebrata</taxon>
        <taxon>Euteleostomi</taxon>
        <taxon>Mammalia</taxon>
        <taxon>Eutheria</taxon>
        <taxon>Euarchontoglires</taxon>
        <taxon>Glires</taxon>
        <taxon>Rodentia</taxon>
        <taxon>Myomorpha</taxon>
        <taxon>Muroidea</taxon>
        <taxon>Muridae</taxon>
        <taxon>Murinae</taxon>
        <taxon>Mus</taxon>
        <taxon>Mus</taxon>
    </lineage>
</organism>
<accession>Q9CR75</accession>
<accession>Q3TVG8</accession>
<accession>Q9QZW3</accession>
<reference key="1">
    <citation type="journal article" date="1999" name="J. Biol. Chem.">
        <title>The mitogen-inducible Fn14 gene encodes a type I transmembrane protein that modulates fibroblast adhesion and migration.</title>
        <authorList>
            <person name="Meighan-Mantha R.L."/>
            <person name="Hsu D.K.W."/>
            <person name="Guo Y."/>
            <person name="Brown S.A.N."/>
            <person name="Feng S.-L.Y."/>
            <person name="Peifley K.A."/>
            <person name="Alberts G.F."/>
            <person name="Copeland N.G."/>
            <person name="Gilbert D.J."/>
            <person name="Jenkins N.A."/>
            <person name="Richards C.M."/>
            <person name="Winkles J.A."/>
        </authorList>
    </citation>
    <scope>NUCLEOTIDE SEQUENCE [MRNA]</scope>
    <source>
        <strain>BALB/cJ</strain>
        <tissue>Fibroblast</tissue>
    </source>
</reference>
<reference key="2">
    <citation type="journal article" date="2005" name="Science">
        <title>The transcriptional landscape of the mammalian genome.</title>
        <authorList>
            <person name="Carninci P."/>
            <person name="Kasukawa T."/>
            <person name="Katayama S."/>
            <person name="Gough J."/>
            <person name="Frith M.C."/>
            <person name="Maeda N."/>
            <person name="Oyama R."/>
            <person name="Ravasi T."/>
            <person name="Lenhard B."/>
            <person name="Wells C."/>
            <person name="Kodzius R."/>
            <person name="Shimokawa K."/>
            <person name="Bajic V.B."/>
            <person name="Brenner S.E."/>
            <person name="Batalov S."/>
            <person name="Forrest A.R."/>
            <person name="Zavolan M."/>
            <person name="Davis M.J."/>
            <person name="Wilming L.G."/>
            <person name="Aidinis V."/>
            <person name="Allen J.E."/>
            <person name="Ambesi-Impiombato A."/>
            <person name="Apweiler R."/>
            <person name="Aturaliya R.N."/>
            <person name="Bailey T.L."/>
            <person name="Bansal M."/>
            <person name="Baxter L."/>
            <person name="Beisel K.W."/>
            <person name="Bersano T."/>
            <person name="Bono H."/>
            <person name="Chalk A.M."/>
            <person name="Chiu K.P."/>
            <person name="Choudhary V."/>
            <person name="Christoffels A."/>
            <person name="Clutterbuck D.R."/>
            <person name="Crowe M.L."/>
            <person name="Dalla E."/>
            <person name="Dalrymple B.P."/>
            <person name="de Bono B."/>
            <person name="Della Gatta G."/>
            <person name="di Bernardo D."/>
            <person name="Down T."/>
            <person name="Engstrom P."/>
            <person name="Fagiolini M."/>
            <person name="Faulkner G."/>
            <person name="Fletcher C.F."/>
            <person name="Fukushima T."/>
            <person name="Furuno M."/>
            <person name="Futaki S."/>
            <person name="Gariboldi M."/>
            <person name="Georgii-Hemming P."/>
            <person name="Gingeras T.R."/>
            <person name="Gojobori T."/>
            <person name="Green R.E."/>
            <person name="Gustincich S."/>
            <person name="Harbers M."/>
            <person name="Hayashi Y."/>
            <person name="Hensch T.K."/>
            <person name="Hirokawa N."/>
            <person name="Hill D."/>
            <person name="Huminiecki L."/>
            <person name="Iacono M."/>
            <person name="Ikeo K."/>
            <person name="Iwama A."/>
            <person name="Ishikawa T."/>
            <person name="Jakt M."/>
            <person name="Kanapin A."/>
            <person name="Katoh M."/>
            <person name="Kawasawa Y."/>
            <person name="Kelso J."/>
            <person name="Kitamura H."/>
            <person name="Kitano H."/>
            <person name="Kollias G."/>
            <person name="Krishnan S.P."/>
            <person name="Kruger A."/>
            <person name="Kummerfeld S.K."/>
            <person name="Kurochkin I.V."/>
            <person name="Lareau L.F."/>
            <person name="Lazarevic D."/>
            <person name="Lipovich L."/>
            <person name="Liu J."/>
            <person name="Liuni S."/>
            <person name="McWilliam S."/>
            <person name="Madan Babu M."/>
            <person name="Madera M."/>
            <person name="Marchionni L."/>
            <person name="Matsuda H."/>
            <person name="Matsuzawa S."/>
            <person name="Miki H."/>
            <person name="Mignone F."/>
            <person name="Miyake S."/>
            <person name="Morris K."/>
            <person name="Mottagui-Tabar S."/>
            <person name="Mulder N."/>
            <person name="Nakano N."/>
            <person name="Nakauchi H."/>
            <person name="Ng P."/>
            <person name="Nilsson R."/>
            <person name="Nishiguchi S."/>
            <person name="Nishikawa S."/>
            <person name="Nori F."/>
            <person name="Ohara O."/>
            <person name="Okazaki Y."/>
            <person name="Orlando V."/>
            <person name="Pang K.C."/>
            <person name="Pavan W.J."/>
            <person name="Pavesi G."/>
            <person name="Pesole G."/>
            <person name="Petrovsky N."/>
            <person name="Piazza S."/>
            <person name="Reed J."/>
            <person name="Reid J.F."/>
            <person name="Ring B.Z."/>
            <person name="Ringwald M."/>
            <person name="Rost B."/>
            <person name="Ruan Y."/>
            <person name="Salzberg S.L."/>
            <person name="Sandelin A."/>
            <person name="Schneider C."/>
            <person name="Schoenbach C."/>
            <person name="Sekiguchi K."/>
            <person name="Semple C.A."/>
            <person name="Seno S."/>
            <person name="Sessa L."/>
            <person name="Sheng Y."/>
            <person name="Shibata Y."/>
            <person name="Shimada H."/>
            <person name="Shimada K."/>
            <person name="Silva D."/>
            <person name="Sinclair B."/>
            <person name="Sperling S."/>
            <person name="Stupka E."/>
            <person name="Sugiura K."/>
            <person name="Sultana R."/>
            <person name="Takenaka Y."/>
            <person name="Taki K."/>
            <person name="Tammoja K."/>
            <person name="Tan S.L."/>
            <person name="Tang S."/>
            <person name="Taylor M.S."/>
            <person name="Tegner J."/>
            <person name="Teichmann S.A."/>
            <person name="Ueda H.R."/>
            <person name="van Nimwegen E."/>
            <person name="Verardo R."/>
            <person name="Wei C.L."/>
            <person name="Yagi K."/>
            <person name="Yamanishi H."/>
            <person name="Zabarovsky E."/>
            <person name="Zhu S."/>
            <person name="Zimmer A."/>
            <person name="Hide W."/>
            <person name="Bult C."/>
            <person name="Grimmond S.M."/>
            <person name="Teasdale R.D."/>
            <person name="Liu E.T."/>
            <person name="Brusic V."/>
            <person name="Quackenbush J."/>
            <person name="Wahlestedt C."/>
            <person name="Mattick J.S."/>
            <person name="Hume D.A."/>
            <person name="Kai C."/>
            <person name="Sasaki D."/>
            <person name="Tomaru Y."/>
            <person name="Fukuda S."/>
            <person name="Kanamori-Katayama M."/>
            <person name="Suzuki M."/>
            <person name="Aoki J."/>
            <person name="Arakawa T."/>
            <person name="Iida J."/>
            <person name="Imamura K."/>
            <person name="Itoh M."/>
            <person name="Kato T."/>
            <person name="Kawaji H."/>
            <person name="Kawagashira N."/>
            <person name="Kawashima T."/>
            <person name="Kojima M."/>
            <person name="Kondo S."/>
            <person name="Konno H."/>
            <person name="Nakano K."/>
            <person name="Ninomiya N."/>
            <person name="Nishio T."/>
            <person name="Okada M."/>
            <person name="Plessy C."/>
            <person name="Shibata K."/>
            <person name="Shiraki T."/>
            <person name="Suzuki S."/>
            <person name="Tagami M."/>
            <person name="Waki K."/>
            <person name="Watahiki A."/>
            <person name="Okamura-Oho Y."/>
            <person name="Suzuki H."/>
            <person name="Kawai J."/>
            <person name="Hayashizaki Y."/>
        </authorList>
    </citation>
    <scope>NUCLEOTIDE SEQUENCE [LARGE SCALE MRNA]</scope>
    <source>
        <strain>C57BL/6J</strain>
        <tissue>Cerebellum</tissue>
        <tissue>Placenta</tissue>
    </source>
</reference>
<reference key="3">
    <citation type="journal article" date="2004" name="Genome Res.">
        <title>The status, quality, and expansion of the NIH full-length cDNA project: the Mammalian Gene Collection (MGC).</title>
        <authorList>
            <consortium name="The MGC Project Team"/>
        </authorList>
    </citation>
    <scope>NUCLEOTIDE SEQUENCE [LARGE SCALE MRNA]</scope>
    <source>
        <tissue>Mammary tumor</tissue>
    </source>
</reference>
<evidence type="ECO:0000250" key="1"/>
<evidence type="ECO:0000255" key="2"/>
<evidence type="ECO:0000305" key="3"/>
<keyword id="KW-0037">Angiogenesis</keyword>
<keyword id="KW-0053">Apoptosis</keyword>
<keyword id="KW-0130">Cell adhesion</keyword>
<keyword id="KW-0217">Developmental protein</keyword>
<keyword id="KW-0221">Differentiation</keyword>
<keyword id="KW-1015">Disulfide bond</keyword>
<keyword id="KW-0472">Membrane</keyword>
<keyword id="KW-0675">Receptor</keyword>
<keyword id="KW-1185">Reference proteome</keyword>
<keyword id="KW-0732">Signal</keyword>
<keyword id="KW-0812">Transmembrane</keyword>
<keyword id="KW-1133">Transmembrane helix</keyword>
<sequence>MASAWPRSLPQILVLGFGLVLMRAAAGEQAPGTSPCSSGSSWSADLDKCMDCASCPARPHSDFCLGCAAAPPAHFRLLWPILGGALSLVLVLALVSSFLVWRRCRRREKFTTPIEETGGEGCPGVALIQ</sequence>
<proteinExistence type="evidence at transcript level"/>
<feature type="signal peptide" evidence="2">
    <location>
        <begin position="1"/>
        <end position="27"/>
    </location>
</feature>
<feature type="chain" id="PRO_0000034612" description="Tumor necrosis factor receptor superfamily member 12A">
    <location>
        <begin position="28"/>
        <end position="129"/>
    </location>
</feature>
<feature type="topological domain" description="Extracellular" evidence="2">
    <location>
        <begin position="28"/>
        <end position="80"/>
    </location>
</feature>
<feature type="transmembrane region" description="Helical" evidence="2">
    <location>
        <begin position="81"/>
        <end position="101"/>
    </location>
</feature>
<feature type="topological domain" description="Cytoplasmic" evidence="2">
    <location>
        <begin position="102"/>
        <end position="129"/>
    </location>
</feature>
<feature type="repeat" description="TNFR-Cys; atypical">
    <location>
        <begin position="36"/>
        <end position="67"/>
    </location>
</feature>
<feature type="disulfide bond" evidence="1">
    <location>
        <begin position="36"/>
        <end position="49"/>
    </location>
</feature>
<feature type="disulfide bond" evidence="1">
    <location>
        <begin position="52"/>
        <end position="67"/>
    </location>
</feature>
<feature type="disulfide bond" evidence="1">
    <location>
        <begin position="55"/>
        <end position="64"/>
    </location>
</feature>
<feature type="sequence conflict" description="In Ref. 1; AAF07882." evidence="3" ref="1">
    <original>SA</original>
    <variation>PG</variation>
    <location>
        <begin position="3"/>
        <end position="4"/>
    </location>
</feature>
<comment type="function">
    <text evidence="1">Receptor for TNFSF12/TWEAK (By similarity). Weak inducer of apoptosis in some cell types. Promotes angiogenesis and the proliferation of endothelial cells. May modulate cellular adhesion to matrix proteins.</text>
</comment>
<comment type="subunit">
    <text evidence="1">Associates with TRAF1 and TRAF2, and probably also with TRAF3.</text>
</comment>
<comment type="subcellular location">
    <subcellularLocation>
        <location>Membrane</location>
        <topology>Single-pass type I membrane protein</topology>
    </subcellularLocation>
</comment>
<comment type="tissue specificity">
    <text>Highly expressed in fetal heart, intestine, kidney, liver, lung and skin, and in adult heart and ovary. Intermediate expression in adult kidney, lung and skin.</text>
</comment>
<comment type="induction">
    <text>By FGF-1.</text>
</comment>
<name>TNR12_MOUSE</name>
<dbReference type="EMBL" id="AF156164">
    <property type="protein sequence ID" value="AAF07882.1"/>
    <property type="molecule type" value="mRNA"/>
</dbReference>
<dbReference type="EMBL" id="AK005382">
    <property type="protein sequence ID" value="BAB23989.1"/>
    <property type="molecule type" value="mRNA"/>
</dbReference>
<dbReference type="EMBL" id="AK005530">
    <property type="protein sequence ID" value="BAB24101.1"/>
    <property type="molecule type" value="mRNA"/>
</dbReference>
<dbReference type="EMBL" id="AK160136">
    <property type="protein sequence ID" value="BAE35650.1"/>
    <property type="molecule type" value="mRNA"/>
</dbReference>
<dbReference type="EMBL" id="BC025860">
    <property type="protein sequence ID" value="AAH25860.1"/>
    <property type="molecule type" value="mRNA"/>
</dbReference>
<dbReference type="CCDS" id="CCDS28456.1"/>
<dbReference type="RefSeq" id="NP_001155218.1">
    <property type="nucleotide sequence ID" value="NM_001161746.1"/>
</dbReference>
<dbReference type="RefSeq" id="NP_038777.2">
    <property type="nucleotide sequence ID" value="NM_013749.2"/>
</dbReference>
<dbReference type="SMR" id="Q9CR75"/>
<dbReference type="BioGRID" id="205159">
    <property type="interactions" value="4"/>
</dbReference>
<dbReference type="FunCoup" id="Q9CR75">
    <property type="interactions" value="325"/>
</dbReference>
<dbReference type="STRING" id="10090.ENSMUSP00000024698"/>
<dbReference type="iPTMnet" id="Q9CR75"/>
<dbReference type="PhosphoSitePlus" id="Q9CR75"/>
<dbReference type="PaxDb" id="10090-ENSMUSP00000024698"/>
<dbReference type="PeptideAtlas" id="Q9CR75"/>
<dbReference type="ProteomicsDB" id="259287"/>
<dbReference type="DNASU" id="27279"/>
<dbReference type="Ensembl" id="ENSMUST00000024698.10">
    <property type="protein sequence ID" value="ENSMUSP00000024698.9"/>
    <property type="gene ID" value="ENSMUSG00000023905.16"/>
</dbReference>
<dbReference type="GeneID" id="27279"/>
<dbReference type="KEGG" id="mmu:27279"/>
<dbReference type="UCSC" id="uc008asv.2">
    <property type="organism name" value="mouse"/>
</dbReference>
<dbReference type="AGR" id="MGI:1351484"/>
<dbReference type="CTD" id="51330"/>
<dbReference type="MGI" id="MGI:1351484">
    <property type="gene designation" value="Tnfrsf12a"/>
</dbReference>
<dbReference type="VEuPathDB" id="HostDB:ENSMUSG00000023905"/>
<dbReference type="eggNOG" id="ENOG502SFZC">
    <property type="taxonomic scope" value="Eukaryota"/>
</dbReference>
<dbReference type="GeneTree" id="ENSGT00960000191910"/>
<dbReference type="HOGENOM" id="CLU_164863_0_0_1"/>
<dbReference type="InParanoid" id="Q9CR75"/>
<dbReference type="OMA" id="HSDFCRG"/>
<dbReference type="OrthoDB" id="55567at9989"/>
<dbReference type="PhylomeDB" id="Q9CR75"/>
<dbReference type="TreeFam" id="TF337901"/>
<dbReference type="Reactome" id="R-MMU-5668541">
    <property type="pathway name" value="TNFR2 non-canonical NF-kB pathway"/>
</dbReference>
<dbReference type="Reactome" id="R-MMU-5676594">
    <property type="pathway name" value="TNF receptor superfamily (TNFSF) members mediating non-canonical NF-kB pathway"/>
</dbReference>
<dbReference type="BioGRID-ORCS" id="27279">
    <property type="hits" value="3 hits in 81 CRISPR screens"/>
</dbReference>
<dbReference type="ChiTaRS" id="Tnfrsf12a">
    <property type="organism name" value="mouse"/>
</dbReference>
<dbReference type="PRO" id="PR:Q9CR75"/>
<dbReference type="Proteomes" id="UP000000589">
    <property type="component" value="Chromosome 17"/>
</dbReference>
<dbReference type="RNAct" id="Q9CR75">
    <property type="molecule type" value="protein"/>
</dbReference>
<dbReference type="Bgee" id="ENSMUSG00000023905">
    <property type="expression patterns" value="Expressed in interventricular septum and 206 other cell types or tissues"/>
</dbReference>
<dbReference type="ExpressionAtlas" id="Q9CR75">
    <property type="expression patterns" value="baseline and differential"/>
</dbReference>
<dbReference type="GO" id="GO:0009986">
    <property type="term" value="C:cell surface"/>
    <property type="evidence" value="ECO:0000314"/>
    <property type="project" value="MGI"/>
</dbReference>
<dbReference type="GO" id="GO:0005886">
    <property type="term" value="C:plasma membrane"/>
    <property type="evidence" value="ECO:0000314"/>
    <property type="project" value="MGI"/>
</dbReference>
<dbReference type="GO" id="GO:0001726">
    <property type="term" value="C:ruffle"/>
    <property type="evidence" value="ECO:0000314"/>
    <property type="project" value="MGI"/>
</dbReference>
<dbReference type="GO" id="GO:0001525">
    <property type="term" value="P:angiogenesis"/>
    <property type="evidence" value="ECO:0007669"/>
    <property type="project" value="UniProtKB-KW"/>
</dbReference>
<dbReference type="GO" id="GO:0007155">
    <property type="term" value="P:cell adhesion"/>
    <property type="evidence" value="ECO:0000314"/>
    <property type="project" value="MGI"/>
</dbReference>
<dbReference type="GO" id="GO:0030154">
    <property type="term" value="P:cell differentiation"/>
    <property type="evidence" value="ECO:0007669"/>
    <property type="project" value="UniProtKB-KW"/>
</dbReference>
<dbReference type="GO" id="GO:0097191">
    <property type="term" value="P:extrinsic apoptotic signaling pathway"/>
    <property type="evidence" value="ECO:0000314"/>
    <property type="project" value="MGI"/>
</dbReference>
<dbReference type="GO" id="GO:0045773">
    <property type="term" value="P:positive regulation of axon extension"/>
    <property type="evidence" value="ECO:0000314"/>
    <property type="project" value="MGI"/>
</dbReference>
<dbReference type="GO" id="GO:2001238">
    <property type="term" value="P:positive regulation of extrinsic apoptotic signaling pathway"/>
    <property type="evidence" value="ECO:0007669"/>
    <property type="project" value="Ensembl"/>
</dbReference>
<dbReference type="GO" id="GO:0045765">
    <property type="term" value="P:regulation of angiogenesis"/>
    <property type="evidence" value="ECO:0000314"/>
    <property type="project" value="UniProtKB"/>
</dbReference>
<dbReference type="GO" id="GO:0061041">
    <property type="term" value="P:regulation of wound healing"/>
    <property type="evidence" value="ECO:0007669"/>
    <property type="project" value="Ensembl"/>
</dbReference>
<dbReference type="GO" id="GO:0006931">
    <property type="term" value="P:substrate-dependent cell migration, cell attachment to substrate"/>
    <property type="evidence" value="ECO:0000314"/>
    <property type="project" value="MGI"/>
</dbReference>
<dbReference type="CDD" id="cd13413">
    <property type="entry name" value="TNFRSF12A"/>
    <property type="match status" value="1"/>
</dbReference>
<dbReference type="FunFam" id="4.10.400.20:FF:000001">
    <property type="entry name" value="tumor necrosis factor receptor superfamily member 12A"/>
    <property type="match status" value="1"/>
</dbReference>
<dbReference type="Gene3D" id="4.10.400.20">
    <property type="match status" value="1"/>
</dbReference>
<dbReference type="InterPro" id="IPR022316">
    <property type="entry name" value="TNFR_12"/>
</dbReference>
<dbReference type="PANTHER" id="PTHR32037">
    <property type="entry name" value="TUMOR NECROSIS FACTOR RECEPTOR SUPERFAMILY MEMBER 12A"/>
    <property type="match status" value="1"/>
</dbReference>
<dbReference type="PANTHER" id="PTHR32037:SF2">
    <property type="entry name" value="TUMOR NECROSIS FACTOR RECEPTOR SUPERFAMILY MEMBER 12A"/>
    <property type="match status" value="1"/>
</dbReference>
<dbReference type="Pfam" id="PF12191">
    <property type="entry name" value="stn_TNFRSF12A"/>
    <property type="match status" value="1"/>
</dbReference>
<dbReference type="PRINTS" id="PR01962">
    <property type="entry name" value="TNFACTORR12"/>
</dbReference>